<gene>
    <name type="primary">sol4</name>
</gene>
<proteinExistence type="predicted"/>
<accession>D7UQ41</accession>
<sequence>MPSTLIHDVQKELKDLPARGIVDFLIQYFFEDINWINQIVHPPRLLAQYENWWKMDTITRVADLEFAVLMLRICAYASHFLPSKKYTVDTIKGRPLSDIRSNCDRLAGRLEGICNAAVLRGSLVRVQYMAFTAMCYECDSRIKLSWDTLCCAIREAQEVGLHREPPMRGDDGMDDLEREMRRRMFCNLRLAKALDRVPFLVDAYCTVSLPQMHLHPTIANLQAPDLFTERVLQAQLVRFWKKLEAVNGPPGARPYDPVIAEERYQRFCNEFLPELPAPFALEPNTDWDQHIPELPRQRELFHVALFESVMHNFRQLLRLDQHHLRSLPNSRMALVTQHRHTLATAAMGLFQSVTSLHAMMSFNQTKLSLVIFYHFEMAVVLSLCIIRACDSNGMQDLEHINFFSPHSPLSSNMIDISQSQCLRTIKEARRQLEMMSLGSVMAETGARQLGILVDHVQATLARSGTQTRSMPSTETLTYNSSSSTSYGDGHAHGVSSELPFTFQQQEGPTANAFRTDSNVFEGLMLWDLSTDALPLDPSFLGLEQLHEISELQPNMGL</sequence>
<comment type="function">
    <text evidence="5">Probable transcription factor that regulates the expression of the gene cluster that mediates the biosynthesis of the phytotoxin solanapyrone, a causal agent of early blight disease of potato and tomato (PubMed:20486243).</text>
</comment>
<comment type="subcellular location">
    <subcellularLocation>
        <location evidence="4">Nucleus</location>
    </subcellularLocation>
</comment>
<reference key="1">
    <citation type="journal article" date="2010" name="ChemBioChem">
        <title>Solanapyrone synthase, a possible Diels-Alderase and iterative type I polyketide synthase encoded in a biosynthetic gene cluster from Alternaria solani.</title>
        <authorList>
            <person name="Kasahara K."/>
            <person name="Miyamoto T."/>
            <person name="Fujimoto T."/>
            <person name="Oguri H."/>
            <person name="Tokiwano T."/>
            <person name="Oikawa H."/>
            <person name="Ebizuka Y."/>
            <person name="Fujii I."/>
        </authorList>
    </citation>
    <scope>NUCLEOTIDE SEQUENCE [GENOMIC DNA]</scope>
    <scope>FUNCTION</scope>
</reference>
<organism>
    <name type="scientific">Alternaria solani</name>
    <dbReference type="NCBI Taxonomy" id="48100"/>
    <lineage>
        <taxon>Eukaryota</taxon>
        <taxon>Fungi</taxon>
        <taxon>Dikarya</taxon>
        <taxon>Ascomycota</taxon>
        <taxon>Pezizomycotina</taxon>
        <taxon>Dothideomycetes</taxon>
        <taxon>Pleosporomycetidae</taxon>
        <taxon>Pleosporales</taxon>
        <taxon>Pleosporineae</taxon>
        <taxon>Pleosporaceae</taxon>
        <taxon>Alternaria</taxon>
        <taxon>Alternaria sect. Porri</taxon>
    </lineage>
</organism>
<feature type="chain" id="PRO_0000438568" description="Probable transcription factor sol4">
    <location>
        <begin position="1"/>
        <end position="557"/>
    </location>
</feature>
<feature type="region of interest" description="Fungal transcription factor domain" evidence="1">
    <location>
        <begin position="26"/>
        <end position="186"/>
    </location>
</feature>
<feature type="region of interest" description="Disordered" evidence="2">
    <location>
        <begin position="463"/>
        <end position="490"/>
    </location>
</feature>
<feature type="compositionally biased region" description="Low complexity" evidence="2">
    <location>
        <begin position="472"/>
        <end position="485"/>
    </location>
</feature>
<name>SOL4_ALTSO</name>
<evidence type="ECO:0000255" key="1"/>
<evidence type="ECO:0000256" key="2">
    <source>
        <dbReference type="SAM" id="MobiDB-lite"/>
    </source>
</evidence>
<evidence type="ECO:0000303" key="3">
    <source>
    </source>
</evidence>
<evidence type="ECO:0000305" key="4"/>
<evidence type="ECO:0000305" key="5">
    <source>
    </source>
</evidence>
<keyword id="KW-0539">Nucleus</keyword>
<keyword id="KW-0804">Transcription</keyword>
<keyword id="KW-0805">Transcription regulation</keyword>
<dbReference type="EMBL" id="AB514562">
    <property type="protein sequence ID" value="BAJ09786.1"/>
    <property type="molecule type" value="Genomic_DNA"/>
</dbReference>
<dbReference type="GO" id="GO:0005634">
    <property type="term" value="C:nucleus"/>
    <property type="evidence" value="ECO:0007669"/>
    <property type="project" value="UniProtKB-SubCell"/>
</dbReference>
<dbReference type="GO" id="GO:0003677">
    <property type="term" value="F:DNA binding"/>
    <property type="evidence" value="ECO:0007669"/>
    <property type="project" value="InterPro"/>
</dbReference>
<dbReference type="GO" id="GO:0008270">
    <property type="term" value="F:zinc ion binding"/>
    <property type="evidence" value="ECO:0007669"/>
    <property type="project" value="InterPro"/>
</dbReference>
<dbReference type="GO" id="GO:0006351">
    <property type="term" value="P:DNA-templated transcription"/>
    <property type="evidence" value="ECO:0007669"/>
    <property type="project" value="InterPro"/>
</dbReference>
<dbReference type="CDD" id="cd12148">
    <property type="entry name" value="fungal_TF_MHR"/>
    <property type="match status" value="1"/>
</dbReference>
<dbReference type="InterPro" id="IPR050613">
    <property type="entry name" value="Sec_Metabolite_Reg"/>
</dbReference>
<dbReference type="InterPro" id="IPR007219">
    <property type="entry name" value="Transcription_factor_dom_fun"/>
</dbReference>
<dbReference type="PANTHER" id="PTHR31001:SF87">
    <property type="entry name" value="COL-21"/>
    <property type="match status" value="1"/>
</dbReference>
<dbReference type="PANTHER" id="PTHR31001">
    <property type="entry name" value="UNCHARACTERIZED TRANSCRIPTIONAL REGULATORY PROTEIN"/>
    <property type="match status" value="1"/>
</dbReference>
<dbReference type="Pfam" id="PF04082">
    <property type="entry name" value="Fungal_trans"/>
    <property type="match status" value="1"/>
</dbReference>
<protein>
    <recommendedName>
        <fullName evidence="3">Probable transcription factor sol4</fullName>
    </recommendedName>
    <alternativeName>
        <fullName evidence="3">Solanapyrone biosynthesis protein 4</fullName>
    </alternativeName>
</protein>